<accession>A8A251</accession>
<protein>
    <recommendedName>
        <fullName evidence="1">UPF0352 protein YejL</fullName>
    </recommendedName>
</protein>
<feature type="chain" id="PRO_1000062301" description="UPF0352 protein YejL">
    <location>
        <begin position="1"/>
        <end position="75"/>
    </location>
</feature>
<gene>
    <name evidence="1" type="primary">yejL</name>
    <name type="ordered locus">EcHS_A2326</name>
</gene>
<evidence type="ECO:0000255" key="1">
    <source>
        <dbReference type="HAMAP-Rule" id="MF_00816"/>
    </source>
</evidence>
<sequence>MPQISRYSDEQVEQLLAELLNVLEKHKAPTDLSLMVLGNMVTNLINTSIAPAQRQAIANSFARALQSSINEDKAH</sequence>
<comment type="similarity">
    <text evidence="1">Belongs to the UPF0352 family.</text>
</comment>
<proteinExistence type="inferred from homology"/>
<reference key="1">
    <citation type="journal article" date="2008" name="J. Bacteriol.">
        <title>The pangenome structure of Escherichia coli: comparative genomic analysis of E. coli commensal and pathogenic isolates.</title>
        <authorList>
            <person name="Rasko D.A."/>
            <person name="Rosovitz M.J."/>
            <person name="Myers G.S.A."/>
            <person name="Mongodin E.F."/>
            <person name="Fricke W.F."/>
            <person name="Gajer P."/>
            <person name="Crabtree J."/>
            <person name="Sebaihia M."/>
            <person name="Thomson N.R."/>
            <person name="Chaudhuri R."/>
            <person name="Henderson I.R."/>
            <person name="Sperandio V."/>
            <person name="Ravel J."/>
        </authorList>
    </citation>
    <scope>NUCLEOTIDE SEQUENCE [LARGE SCALE GENOMIC DNA]</scope>
    <source>
        <strain>HS</strain>
    </source>
</reference>
<name>YEJL_ECOHS</name>
<organism>
    <name type="scientific">Escherichia coli O9:H4 (strain HS)</name>
    <dbReference type="NCBI Taxonomy" id="331112"/>
    <lineage>
        <taxon>Bacteria</taxon>
        <taxon>Pseudomonadati</taxon>
        <taxon>Pseudomonadota</taxon>
        <taxon>Gammaproteobacteria</taxon>
        <taxon>Enterobacterales</taxon>
        <taxon>Enterobacteriaceae</taxon>
        <taxon>Escherichia</taxon>
    </lineage>
</organism>
<dbReference type="EMBL" id="CP000802">
    <property type="protein sequence ID" value="ABV06605.1"/>
    <property type="molecule type" value="Genomic_DNA"/>
</dbReference>
<dbReference type="RefSeq" id="WP_001135667.1">
    <property type="nucleotide sequence ID" value="NC_009800.1"/>
</dbReference>
<dbReference type="BMRB" id="A8A251"/>
<dbReference type="SMR" id="A8A251"/>
<dbReference type="KEGG" id="ecx:EcHS_A2326"/>
<dbReference type="HOGENOM" id="CLU_175457_0_0_6"/>
<dbReference type="FunFam" id="1.10.3390.10:FF:000001">
    <property type="entry name" value="UPF0352 protein YejL"/>
    <property type="match status" value="1"/>
</dbReference>
<dbReference type="Gene3D" id="1.10.3390.10">
    <property type="entry name" value="YejL-like"/>
    <property type="match status" value="1"/>
</dbReference>
<dbReference type="HAMAP" id="MF_00816">
    <property type="entry name" value="UPF0352"/>
    <property type="match status" value="1"/>
</dbReference>
<dbReference type="InterPro" id="IPR009857">
    <property type="entry name" value="UPF0352"/>
</dbReference>
<dbReference type="InterPro" id="IPR023202">
    <property type="entry name" value="YejL_sf"/>
</dbReference>
<dbReference type="NCBIfam" id="NF010242">
    <property type="entry name" value="PRK13689.1"/>
    <property type="match status" value="1"/>
</dbReference>
<dbReference type="Pfam" id="PF07208">
    <property type="entry name" value="DUF1414"/>
    <property type="match status" value="1"/>
</dbReference>
<dbReference type="PIRSF" id="PIRSF006188">
    <property type="entry name" value="UCP006188"/>
    <property type="match status" value="1"/>
</dbReference>
<dbReference type="SUPFAM" id="SSF158651">
    <property type="entry name" value="YejL-like"/>
    <property type="match status" value="1"/>
</dbReference>